<keyword id="KW-0472">Membrane</keyword>
<keyword id="KW-1185">Reference proteome</keyword>
<keyword id="KW-0812">Transmembrane</keyword>
<keyword id="KW-1133">Transmembrane helix</keyword>
<organism>
    <name type="scientific">Dictyostelium discoideum</name>
    <name type="common">Social amoeba</name>
    <dbReference type="NCBI Taxonomy" id="44689"/>
    <lineage>
        <taxon>Eukaryota</taxon>
        <taxon>Amoebozoa</taxon>
        <taxon>Evosea</taxon>
        <taxon>Eumycetozoa</taxon>
        <taxon>Dictyostelia</taxon>
        <taxon>Dictyosteliales</taxon>
        <taxon>Dictyosteliaceae</taxon>
        <taxon>Dictyostelium</taxon>
    </lineage>
</organism>
<comment type="function">
    <text evidence="1">Positive regulator of ferroptosis.</text>
</comment>
<comment type="subcellular location">
    <subcellularLocation>
        <location evidence="3">Membrane</location>
        <topology evidence="3">Multi-pass membrane protein</topology>
    </subcellularLocation>
</comment>
<comment type="similarity">
    <text evidence="3">Belongs to the TMEM164 family.</text>
</comment>
<name>TM164_DICDI</name>
<gene>
    <name type="primary">tmem164</name>
    <name type="ORF">DDB_G0287401</name>
</gene>
<evidence type="ECO:0000250" key="1">
    <source>
        <dbReference type="UniProtKB" id="Q5U3C3"/>
    </source>
</evidence>
<evidence type="ECO:0000255" key="2"/>
<evidence type="ECO:0000305" key="3"/>
<dbReference type="EMBL" id="AAFI02000100">
    <property type="protein sequence ID" value="EAL63768.1"/>
    <property type="molecule type" value="Genomic_DNA"/>
</dbReference>
<dbReference type="RefSeq" id="XP_637289.1">
    <property type="nucleotide sequence ID" value="XM_632197.1"/>
</dbReference>
<dbReference type="PaxDb" id="44689-DDB0266370"/>
<dbReference type="EnsemblProtists" id="EAL63768">
    <property type="protein sequence ID" value="EAL63768"/>
    <property type="gene ID" value="DDB_G0287401"/>
</dbReference>
<dbReference type="GeneID" id="8626121"/>
<dbReference type="KEGG" id="ddi:DDB_G0287401"/>
<dbReference type="dictyBase" id="DDB_G0287401">
    <property type="gene designation" value="tmem164"/>
</dbReference>
<dbReference type="VEuPathDB" id="AmoebaDB:DDB_G0287401"/>
<dbReference type="HOGENOM" id="CLU_1013470_0_0_1"/>
<dbReference type="InParanoid" id="Q54KD4"/>
<dbReference type="OMA" id="FFIQHYA"/>
<dbReference type="PhylomeDB" id="Q54KD4"/>
<dbReference type="PRO" id="PR:Q54KD4"/>
<dbReference type="Proteomes" id="UP000002195">
    <property type="component" value="Chromosome 5"/>
</dbReference>
<dbReference type="GO" id="GO:0016020">
    <property type="term" value="C:membrane"/>
    <property type="evidence" value="ECO:0007669"/>
    <property type="project" value="UniProtKB-SubCell"/>
</dbReference>
<dbReference type="GO" id="GO:0160020">
    <property type="term" value="P:positive regulation of ferroptosis"/>
    <property type="evidence" value="ECO:0000250"/>
    <property type="project" value="UniProtKB"/>
</dbReference>
<dbReference type="InterPro" id="IPR026508">
    <property type="entry name" value="TMEM164"/>
</dbReference>
<dbReference type="PANTHER" id="PTHR20948">
    <property type="entry name" value="TRANSMEMBRANE PROTEIN 164"/>
    <property type="match status" value="1"/>
</dbReference>
<dbReference type="PANTHER" id="PTHR20948:SF2">
    <property type="entry name" value="TRANSMEMBRANE PROTEIN 164"/>
    <property type="match status" value="1"/>
</dbReference>
<dbReference type="Pfam" id="PF14808">
    <property type="entry name" value="TMEM164"/>
    <property type="match status" value="1"/>
</dbReference>
<proteinExistence type="inferred from homology"/>
<accession>Q54KD4</accession>
<protein>
    <recommendedName>
        <fullName>Transmembrane protein 164 homolog</fullName>
    </recommendedName>
</protein>
<reference key="1">
    <citation type="journal article" date="2005" name="Nature">
        <title>The genome of the social amoeba Dictyostelium discoideum.</title>
        <authorList>
            <person name="Eichinger L."/>
            <person name="Pachebat J.A."/>
            <person name="Gloeckner G."/>
            <person name="Rajandream M.A."/>
            <person name="Sucgang R."/>
            <person name="Berriman M."/>
            <person name="Song J."/>
            <person name="Olsen R."/>
            <person name="Szafranski K."/>
            <person name="Xu Q."/>
            <person name="Tunggal B."/>
            <person name="Kummerfeld S."/>
            <person name="Madera M."/>
            <person name="Konfortov B.A."/>
            <person name="Rivero F."/>
            <person name="Bankier A.T."/>
            <person name="Lehmann R."/>
            <person name="Hamlin N."/>
            <person name="Davies R."/>
            <person name="Gaudet P."/>
            <person name="Fey P."/>
            <person name="Pilcher K."/>
            <person name="Chen G."/>
            <person name="Saunders D."/>
            <person name="Sodergren E.J."/>
            <person name="Davis P."/>
            <person name="Kerhornou A."/>
            <person name="Nie X."/>
            <person name="Hall N."/>
            <person name="Anjard C."/>
            <person name="Hemphill L."/>
            <person name="Bason N."/>
            <person name="Farbrother P."/>
            <person name="Desany B."/>
            <person name="Just E."/>
            <person name="Morio T."/>
            <person name="Rost R."/>
            <person name="Churcher C.M."/>
            <person name="Cooper J."/>
            <person name="Haydock S."/>
            <person name="van Driessche N."/>
            <person name="Cronin A."/>
            <person name="Goodhead I."/>
            <person name="Muzny D.M."/>
            <person name="Mourier T."/>
            <person name="Pain A."/>
            <person name="Lu M."/>
            <person name="Harper D."/>
            <person name="Lindsay R."/>
            <person name="Hauser H."/>
            <person name="James K.D."/>
            <person name="Quiles M."/>
            <person name="Madan Babu M."/>
            <person name="Saito T."/>
            <person name="Buchrieser C."/>
            <person name="Wardroper A."/>
            <person name="Felder M."/>
            <person name="Thangavelu M."/>
            <person name="Johnson D."/>
            <person name="Knights A."/>
            <person name="Loulseged H."/>
            <person name="Mungall K.L."/>
            <person name="Oliver K."/>
            <person name="Price C."/>
            <person name="Quail M.A."/>
            <person name="Urushihara H."/>
            <person name="Hernandez J."/>
            <person name="Rabbinowitsch E."/>
            <person name="Steffen D."/>
            <person name="Sanders M."/>
            <person name="Ma J."/>
            <person name="Kohara Y."/>
            <person name="Sharp S."/>
            <person name="Simmonds M.N."/>
            <person name="Spiegler S."/>
            <person name="Tivey A."/>
            <person name="Sugano S."/>
            <person name="White B."/>
            <person name="Walker D."/>
            <person name="Woodward J.R."/>
            <person name="Winckler T."/>
            <person name="Tanaka Y."/>
            <person name="Shaulsky G."/>
            <person name="Schleicher M."/>
            <person name="Weinstock G.M."/>
            <person name="Rosenthal A."/>
            <person name="Cox E.C."/>
            <person name="Chisholm R.L."/>
            <person name="Gibbs R.A."/>
            <person name="Loomis W.F."/>
            <person name="Platzer M."/>
            <person name="Kay R.R."/>
            <person name="Williams J.G."/>
            <person name="Dear P.H."/>
            <person name="Noegel A.A."/>
            <person name="Barrell B.G."/>
            <person name="Kuspa A."/>
        </authorList>
    </citation>
    <scope>NUCLEOTIDE SEQUENCE [LARGE SCALE GENOMIC DNA]</scope>
    <source>
        <strain>AX4</strain>
    </source>
</reference>
<sequence length="275" mass="32226">MKYLIEVIGETFLSISDPIDHRHWFLSKEQHAYEFIFMNLFYLVVIFIGINLNKKREYENQRKPKPIPEKDYPSLLNKIVAIILAINVFLNLIYKCLRGWRVVFFMLQPCHIVSTIYCYCLLTNNYQFGRKVFKISIYYILVTIAALVAPDLADLTLPFECYNFFIQHYALLIAPFLLQAYRYNIEFELPYALISQGLFGISHFFVFEIFCFISGTNINYMLFPPPLGEFSYLTQESYRVGIAFILFILALGIGRLVILIGSKIRSTFLLKNKSK</sequence>
<feature type="chain" id="PRO_0000327508" description="Transmembrane protein 164 homolog">
    <location>
        <begin position="1"/>
        <end position="275"/>
    </location>
</feature>
<feature type="transmembrane region" description="Helical" evidence="2">
    <location>
        <begin position="32"/>
        <end position="52"/>
    </location>
</feature>
<feature type="transmembrane region" description="Helical" evidence="2">
    <location>
        <begin position="74"/>
        <end position="94"/>
    </location>
</feature>
<feature type="transmembrane region" description="Helical" evidence="2">
    <location>
        <begin position="102"/>
        <end position="122"/>
    </location>
</feature>
<feature type="transmembrane region" description="Helical" evidence="2">
    <location>
        <begin position="135"/>
        <end position="155"/>
    </location>
</feature>
<feature type="transmembrane region" description="Helical" evidence="2">
    <location>
        <begin position="157"/>
        <end position="177"/>
    </location>
</feature>
<feature type="transmembrane region" description="Helical" evidence="2">
    <location>
        <begin position="193"/>
        <end position="213"/>
    </location>
</feature>
<feature type="transmembrane region" description="Helical" evidence="2">
    <location>
        <begin position="240"/>
        <end position="260"/>
    </location>
</feature>